<sequence length="204" mass="22554">MKVSSAEFVTSGTRPAHYPPPELPEVAFAGRSNVGKSSLINVLVNRKGLVRTSSTPGRTQLINFFRVNGSLMLVDLPGYGFAKVPLAVKKEWGPMVETYLSTRPNLSCVVLIVDIRREPTEEDQLMLQWLRAYNVAVLVVVTKCDKVSKNERAKQAAIITRTLGLARDEMAFFSALSKEGRDEVWARIEVMLAAGQEEAEESGE</sequence>
<proteinExistence type="inferred from homology"/>
<keyword id="KW-0131">Cell cycle</keyword>
<keyword id="KW-0132">Cell division</keyword>
<keyword id="KW-0342">GTP-binding</keyword>
<keyword id="KW-0460">Magnesium</keyword>
<keyword id="KW-0479">Metal-binding</keyword>
<keyword id="KW-0547">Nucleotide-binding</keyword>
<keyword id="KW-1185">Reference proteome</keyword>
<keyword id="KW-0717">Septation</keyword>
<accession>Q39YG6</accession>
<comment type="function">
    <text evidence="1">Necessary for normal cell division and for the maintenance of normal septation.</text>
</comment>
<comment type="cofactor">
    <cofactor evidence="1">
        <name>Mg(2+)</name>
        <dbReference type="ChEBI" id="CHEBI:18420"/>
    </cofactor>
</comment>
<comment type="similarity">
    <text evidence="1">Belongs to the TRAFAC class TrmE-Era-EngA-EngB-Septin-like GTPase superfamily. EngB GTPase family.</text>
</comment>
<organism>
    <name type="scientific">Geobacter metallireducens (strain ATCC 53774 / DSM 7210 / GS-15)</name>
    <dbReference type="NCBI Taxonomy" id="269799"/>
    <lineage>
        <taxon>Bacteria</taxon>
        <taxon>Pseudomonadati</taxon>
        <taxon>Thermodesulfobacteriota</taxon>
        <taxon>Desulfuromonadia</taxon>
        <taxon>Geobacterales</taxon>
        <taxon>Geobacteraceae</taxon>
        <taxon>Geobacter</taxon>
    </lineage>
</organism>
<dbReference type="EMBL" id="CP000148">
    <property type="protein sequence ID" value="ABB30708.1"/>
    <property type="molecule type" value="Genomic_DNA"/>
</dbReference>
<dbReference type="SMR" id="Q39YG6"/>
<dbReference type="STRING" id="269799.Gmet_0465"/>
<dbReference type="KEGG" id="gme:Gmet_0465"/>
<dbReference type="eggNOG" id="COG0218">
    <property type="taxonomic scope" value="Bacteria"/>
</dbReference>
<dbReference type="HOGENOM" id="CLU_033732_3_0_7"/>
<dbReference type="Proteomes" id="UP000007073">
    <property type="component" value="Chromosome"/>
</dbReference>
<dbReference type="GO" id="GO:0005829">
    <property type="term" value="C:cytosol"/>
    <property type="evidence" value="ECO:0007669"/>
    <property type="project" value="TreeGrafter"/>
</dbReference>
<dbReference type="GO" id="GO:0005525">
    <property type="term" value="F:GTP binding"/>
    <property type="evidence" value="ECO:0007669"/>
    <property type="project" value="UniProtKB-UniRule"/>
</dbReference>
<dbReference type="GO" id="GO:0046872">
    <property type="term" value="F:metal ion binding"/>
    <property type="evidence" value="ECO:0007669"/>
    <property type="project" value="UniProtKB-KW"/>
</dbReference>
<dbReference type="GO" id="GO:0000917">
    <property type="term" value="P:division septum assembly"/>
    <property type="evidence" value="ECO:0007669"/>
    <property type="project" value="UniProtKB-KW"/>
</dbReference>
<dbReference type="CDD" id="cd01876">
    <property type="entry name" value="YihA_EngB"/>
    <property type="match status" value="1"/>
</dbReference>
<dbReference type="FunFam" id="3.40.50.300:FF:000098">
    <property type="entry name" value="Probable GTP-binding protein EngB"/>
    <property type="match status" value="1"/>
</dbReference>
<dbReference type="Gene3D" id="3.40.50.300">
    <property type="entry name" value="P-loop containing nucleotide triphosphate hydrolases"/>
    <property type="match status" value="1"/>
</dbReference>
<dbReference type="HAMAP" id="MF_00321">
    <property type="entry name" value="GTPase_EngB"/>
    <property type="match status" value="1"/>
</dbReference>
<dbReference type="InterPro" id="IPR030393">
    <property type="entry name" value="G_ENGB_dom"/>
</dbReference>
<dbReference type="InterPro" id="IPR006073">
    <property type="entry name" value="GTP-bd"/>
</dbReference>
<dbReference type="InterPro" id="IPR019987">
    <property type="entry name" value="GTP-bd_ribosome_bio_YsxC"/>
</dbReference>
<dbReference type="InterPro" id="IPR027417">
    <property type="entry name" value="P-loop_NTPase"/>
</dbReference>
<dbReference type="InterPro" id="IPR005225">
    <property type="entry name" value="Small_GTP-bd"/>
</dbReference>
<dbReference type="NCBIfam" id="TIGR03598">
    <property type="entry name" value="GTPase_YsxC"/>
    <property type="match status" value="1"/>
</dbReference>
<dbReference type="NCBIfam" id="TIGR00231">
    <property type="entry name" value="small_GTP"/>
    <property type="match status" value="1"/>
</dbReference>
<dbReference type="PANTHER" id="PTHR11649:SF13">
    <property type="entry name" value="ENGB-TYPE G DOMAIN-CONTAINING PROTEIN"/>
    <property type="match status" value="1"/>
</dbReference>
<dbReference type="PANTHER" id="PTHR11649">
    <property type="entry name" value="MSS1/TRME-RELATED GTP-BINDING PROTEIN"/>
    <property type="match status" value="1"/>
</dbReference>
<dbReference type="Pfam" id="PF01926">
    <property type="entry name" value="MMR_HSR1"/>
    <property type="match status" value="1"/>
</dbReference>
<dbReference type="SUPFAM" id="SSF52540">
    <property type="entry name" value="P-loop containing nucleoside triphosphate hydrolases"/>
    <property type="match status" value="1"/>
</dbReference>
<dbReference type="PROSITE" id="PS51706">
    <property type="entry name" value="G_ENGB"/>
    <property type="match status" value="1"/>
</dbReference>
<reference key="1">
    <citation type="journal article" date="2009" name="BMC Microbiol.">
        <title>The genome sequence of Geobacter metallireducens: features of metabolism, physiology and regulation common and dissimilar to Geobacter sulfurreducens.</title>
        <authorList>
            <person name="Aklujkar M."/>
            <person name="Krushkal J."/>
            <person name="DiBartolo G."/>
            <person name="Lapidus A."/>
            <person name="Land M.L."/>
            <person name="Lovley D.R."/>
        </authorList>
    </citation>
    <scope>NUCLEOTIDE SEQUENCE [LARGE SCALE GENOMIC DNA]</scope>
    <source>
        <strain>ATCC 53774 / DSM 7210 / GS-15</strain>
    </source>
</reference>
<name>ENGB_GEOMG</name>
<evidence type="ECO:0000255" key="1">
    <source>
        <dbReference type="HAMAP-Rule" id="MF_00321"/>
    </source>
</evidence>
<evidence type="ECO:0000256" key="2">
    <source>
        <dbReference type="SAM" id="MobiDB-lite"/>
    </source>
</evidence>
<protein>
    <recommendedName>
        <fullName evidence="1">Probable GTP-binding protein EngB</fullName>
    </recommendedName>
</protein>
<feature type="chain" id="PRO_0000266867" description="Probable GTP-binding protein EngB">
    <location>
        <begin position="1"/>
        <end position="204"/>
    </location>
</feature>
<feature type="domain" description="EngB-type G" evidence="1">
    <location>
        <begin position="22"/>
        <end position="194"/>
    </location>
</feature>
<feature type="region of interest" description="Disordered" evidence="2">
    <location>
        <begin position="1"/>
        <end position="21"/>
    </location>
</feature>
<feature type="binding site" evidence="1">
    <location>
        <begin position="30"/>
        <end position="37"/>
    </location>
    <ligand>
        <name>GTP</name>
        <dbReference type="ChEBI" id="CHEBI:37565"/>
    </ligand>
</feature>
<feature type="binding site" evidence="1">
    <location>
        <position position="37"/>
    </location>
    <ligand>
        <name>Mg(2+)</name>
        <dbReference type="ChEBI" id="CHEBI:18420"/>
    </ligand>
</feature>
<feature type="binding site" evidence="1">
    <location>
        <begin position="57"/>
        <end position="61"/>
    </location>
    <ligand>
        <name>GTP</name>
        <dbReference type="ChEBI" id="CHEBI:37565"/>
    </ligand>
</feature>
<feature type="binding site" evidence="1">
    <location>
        <position position="59"/>
    </location>
    <ligand>
        <name>Mg(2+)</name>
        <dbReference type="ChEBI" id="CHEBI:18420"/>
    </ligand>
</feature>
<feature type="binding site" evidence="1">
    <location>
        <begin position="75"/>
        <end position="78"/>
    </location>
    <ligand>
        <name>GTP</name>
        <dbReference type="ChEBI" id="CHEBI:37565"/>
    </ligand>
</feature>
<feature type="binding site" evidence="1">
    <location>
        <begin position="142"/>
        <end position="145"/>
    </location>
    <ligand>
        <name>GTP</name>
        <dbReference type="ChEBI" id="CHEBI:37565"/>
    </ligand>
</feature>
<feature type="binding site" evidence="1">
    <location>
        <begin position="173"/>
        <end position="175"/>
    </location>
    <ligand>
        <name>GTP</name>
        <dbReference type="ChEBI" id="CHEBI:37565"/>
    </ligand>
</feature>
<gene>
    <name evidence="1" type="primary">engB</name>
    <name type="ordered locus">Gmet_0465</name>
</gene>